<accession>Q03W33</accession>
<feature type="chain" id="PRO_1000003003" description="Phospho-N-acetylmuramoyl-pentapeptide-transferase">
    <location>
        <begin position="1"/>
        <end position="320"/>
    </location>
</feature>
<feature type="transmembrane region" description="Helical" evidence="1">
    <location>
        <begin position="5"/>
        <end position="25"/>
    </location>
</feature>
<feature type="transmembrane region" description="Helical" evidence="1">
    <location>
        <begin position="51"/>
        <end position="71"/>
    </location>
</feature>
<feature type="transmembrane region" description="Helical" evidence="1">
    <location>
        <begin position="75"/>
        <end position="95"/>
    </location>
</feature>
<feature type="transmembrane region" description="Helical" evidence="1">
    <location>
        <begin position="121"/>
        <end position="141"/>
    </location>
</feature>
<feature type="transmembrane region" description="Helical" evidence="1">
    <location>
        <begin position="143"/>
        <end position="163"/>
    </location>
</feature>
<feature type="transmembrane region" description="Helical" evidence="1">
    <location>
        <begin position="176"/>
        <end position="196"/>
    </location>
</feature>
<feature type="transmembrane region" description="Helical" evidence="1">
    <location>
        <begin position="198"/>
        <end position="218"/>
    </location>
</feature>
<feature type="transmembrane region" description="Helical" evidence="1">
    <location>
        <begin position="241"/>
        <end position="261"/>
    </location>
</feature>
<feature type="transmembrane region" description="Helical" evidence="1">
    <location>
        <begin position="300"/>
        <end position="320"/>
    </location>
</feature>
<protein>
    <recommendedName>
        <fullName evidence="1">Phospho-N-acetylmuramoyl-pentapeptide-transferase</fullName>
        <ecNumber evidence="1">2.7.8.13</ecNumber>
    </recommendedName>
    <alternativeName>
        <fullName evidence="1">UDP-MurNAc-pentapeptide phosphotransferase</fullName>
    </alternativeName>
</protein>
<sequence>MTEYFWAFTRAFIVTVIFMPAVIKFLKQSKEQAVIRKLGPDHQSKAGTPSMGGALFIAAASLSALIGSVAYSGKIGFVMVLIPILAVVAYAIIGGIDDALKMIHHADDGFRFIPKLLAQTLCAVVIMIIMWIMQIPLILNIPFIGVFNLGIFYFIFLWFWLVGWSNATNLTDGLDGLLTGTSLIVYLVYTWIALGVHNHIIVIFNASIIGALVGFLLFNKPKAKIFMGDTGSLALGAGLAIESIVLGIPFSLLWFGLIFVIETLSVVIQTIGYHFWKKRIFPMAPIHHSFEKFGWNEWQIDALFWIVTAIIGIIGILYMS</sequence>
<comment type="function">
    <text evidence="1">Catalyzes the initial step of the lipid cycle reactions in the biosynthesis of the cell wall peptidoglycan: transfers peptidoglycan precursor phospho-MurNAc-pentapeptide from UDP-MurNAc-pentapeptide onto the lipid carrier undecaprenyl phosphate, yielding undecaprenyl-pyrophosphoryl-MurNAc-pentapeptide, known as lipid I.</text>
</comment>
<comment type="catalytic activity">
    <reaction evidence="1">
        <text>UDP-N-acetyl-alpha-D-muramoyl-L-alanyl-gamma-D-glutamyl-L-lysyl-D-alanyl-D-alanine + di-trans,octa-cis-undecaprenyl phosphate = Mur2Ac(oyl-L-Ala-gamma-D-Glu-L-Lys-D-Ala-D-Ala)-di-trans,octa-cis-undecaprenyl diphosphate + UMP</text>
        <dbReference type="Rhea" id="RHEA:21920"/>
        <dbReference type="ChEBI" id="CHEBI:57865"/>
        <dbReference type="ChEBI" id="CHEBI:60032"/>
        <dbReference type="ChEBI" id="CHEBI:60392"/>
        <dbReference type="ChEBI" id="CHEBI:70758"/>
        <dbReference type="EC" id="2.7.8.13"/>
    </reaction>
</comment>
<comment type="cofactor">
    <cofactor evidence="1">
        <name>Mg(2+)</name>
        <dbReference type="ChEBI" id="CHEBI:18420"/>
    </cofactor>
</comment>
<comment type="pathway">
    <text evidence="1">Cell wall biogenesis; peptidoglycan biosynthesis.</text>
</comment>
<comment type="subcellular location">
    <subcellularLocation>
        <location evidence="1">Cell membrane</location>
        <topology evidence="1">Multi-pass membrane protein</topology>
    </subcellularLocation>
</comment>
<comment type="similarity">
    <text evidence="1">Belongs to the glycosyltransferase 4 family. MraY subfamily.</text>
</comment>
<dbReference type="EC" id="2.7.8.13" evidence="1"/>
<dbReference type="EMBL" id="CP000414">
    <property type="protein sequence ID" value="ABJ62589.1"/>
    <property type="molecule type" value="Genomic_DNA"/>
</dbReference>
<dbReference type="RefSeq" id="WP_002815199.1">
    <property type="nucleotide sequence ID" value="NC_008531.1"/>
</dbReference>
<dbReference type="SMR" id="Q03W33"/>
<dbReference type="EnsemblBacteria" id="ABJ62589">
    <property type="protein sequence ID" value="ABJ62589"/>
    <property type="gene ID" value="LEUM_1497"/>
</dbReference>
<dbReference type="GeneID" id="29577629"/>
<dbReference type="KEGG" id="lme:LEUM_1497"/>
<dbReference type="eggNOG" id="COG0472">
    <property type="taxonomic scope" value="Bacteria"/>
</dbReference>
<dbReference type="HOGENOM" id="CLU_023982_0_1_9"/>
<dbReference type="UniPathway" id="UPA00219"/>
<dbReference type="Proteomes" id="UP000000362">
    <property type="component" value="Chromosome"/>
</dbReference>
<dbReference type="GO" id="GO:0005886">
    <property type="term" value="C:plasma membrane"/>
    <property type="evidence" value="ECO:0007669"/>
    <property type="project" value="UniProtKB-SubCell"/>
</dbReference>
<dbReference type="GO" id="GO:0046872">
    <property type="term" value="F:metal ion binding"/>
    <property type="evidence" value="ECO:0007669"/>
    <property type="project" value="UniProtKB-KW"/>
</dbReference>
<dbReference type="GO" id="GO:0008963">
    <property type="term" value="F:phospho-N-acetylmuramoyl-pentapeptide-transferase activity"/>
    <property type="evidence" value="ECO:0007669"/>
    <property type="project" value="UniProtKB-UniRule"/>
</dbReference>
<dbReference type="GO" id="GO:0051301">
    <property type="term" value="P:cell division"/>
    <property type="evidence" value="ECO:0007669"/>
    <property type="project" value="UniProtKB-KW"/>
</dbReference>
<dbReference type="GO" id="GO:0071555">
    <property type="term" value="P:cell wall organization"/>
    <property type="evidence" value="ECO:0007669"/>
    <property type="project" value="UniProtKB-KW"/>
</dbReference>
<dbReference type="GO" id="GO:0009252">
    <property type="term" value="P:peptidoglycan biosynthetic process"/>
    <property type="evidence" value="ECO:0007669"/>
    <property type="project" value="UniProtKB-UniRule"/>
</dbReference>
<dbReference type="GO" id="GO:0008360">
    <property type="term" value="P:regulation of cell shape"/>
    <property type="evidence" value="ECO:0007669"/>
    <property type="project" value="UniProtKB-KW"/>
</dbReference>
<dbReference type="CDD" id="cd06852">
    <property type="entry name" value="GT_MraY"/>
    <property type="match status" value="1"/>
</dbReference>
<dbReference type="HAMAP" id="MF_00038">
    <property type="entry name" value="MraY"/>
    <property type="match status" value="1"/>
</dbReference>
<dbReference type="InterPro" id="IPR000715">
    <property type="entry name" value="Glycosyl_transferase_4"/>
</dbReference>
<dbReference type="InterPro" id="IPR003524">
    <property type="entry name" value="PNAcMuramoyl-5peptid_Trfase"/>
</dbReference>
<dbReference type="InterPro" id="IPR018480">
    <property type="entry name" value="PNAcMuramoyl-5peptid_Trfase_CS"/>
</dbReference>
<dbReference type="NCBIfam" id="TIGR00445">
    <property type="entry name" value="mraY"/>
    <property type="match status" value="1"/>
</dbReference>
<dbReference type="PANTHER" id="PTHR22926">
    <property type="entry name" value="PHOSPHO-N-ACETYLMURAMOYL-PENTAPEPTIDE-TRANSFERASE"/>
    <property type="match status" value="1"/>
</dbReference>
<dbReference type="PANTHER" id="PTHR22926:SF5">
    <property type="entry name" value="PHOSPHO-N-ACETYLMURAMOYL-PENTAPEPTIDE-TRANSFERASE HOMOLOG"/>
    <property type="match status" value="1"/>
</dbReference>
<dbReference type="Pfam" id="PF00953">
    <property type="entry name" value="Glycos_transf_4"/>
    <property type="match status" value="1"/>
</dbReference>
<dbReference type="Pfam" id="PF10555">
    <property type="entry name" value="MraY_sig1"/>
    <property type="match status" value="1"/>
</dbReference>
<dbReference type="PROSITE" id="PS01347">
    <property type="entry name" value="MRAY_1"/>
    <property type="match status" value="1"/>
</dbReference>
<dbReference type="PROSITE" id="PS01348">
    <property type="entry name" value="MRAY_2"/>
    <property type="match status" value="1"/>
</dbReference>
<reference key="1">
    <citation type="journal article" date="2006" name="Proc. Natl. Acad. Sci. U.S.A.">
        <title>Comparative genomics of the lactic acid bacteria.</title>
        <authorList>
            <person name="Makarova K.S."/>
            <person name="Slesarev A."/>
            <person name="Wolf Y.I."/>
            <person name="Sorokin A."/>
            <person name="Mirkin B."/>
            <person name="Koonin E.V."/>
            <person name="Pavlov A."/>
            <person name="Pavlova N."/>
            <person name="Karamychev V."/>
            <person name="Polouchine N."/>
            <person name="Shakhova V."/>
            <person name="Grigoriev I."/>
            <person name="Lou Y."/>
            <person name="Rohksar D."/>
            <person name="Lucas S."/>
            <person name="Huang K."/>
            <person name="Goodstein D.M."/>
            <person name="Hawkins T."/>
            <person name="Plengvidhya V."/>
            <person name="Welker D."/>
            <person name="Hughes J."/>
            <person name="Goh Y."/>
            <person name="Benson A."/>
            <person name="Baldwin K."/>
            <person name="Lee J.-H."/>
            <person name="Diaz-Muniz I."/>
            <person name="Dosti B."/>
            <person name="Smeianov V."/>
            <person name="Wechter W."/>
            <person name="Barabote R."/>
            <person name="Lorca G."/>
            <person name="Altermann E."/>
            <person name="Barrangou R."/>
            <person name="Ganesan B."/>
            <person name="Xie Y."/>
            <person name="Rawsthorne H."/>
            <person name="Tamir D."/>
            <person name="Parker C."/>
            <person name="Breidt F."/>
            <person name="Broadbent J.R."/>
            <person name="Hutkins R."/>
            <person name="O'Sullivan D."/>
            <person name="Steele J."/>
            <person name="Unlu G."/>
            <person name="Saier M.H. Jr."/>
            <person name="Klaenhammer T."/>
            <person name="Richardson P."/>
            <person name="Kozyavkin S."/>
            <person name="Weimer B.C."/>
            <person name="Mills D.A."/>
        </authorList>
    </citation>
    <scope>NUCLEOTIDE SEQUENCE [LARGE SCALE GENOMIC DNA]</scope>
    <source>
        <strain>ATCC 8293 / DSM 20343 / BCRC 11652 / CCM 1803 / JCM 6124 / NCDO 523 / NBRC 100496 / NCIMB 8023 / NCTC 12954 / NRRL B-1118 / 37Y</strain>
    </source>
</reference>
<keyword id="KW-0131">Cell cycle</keyword>
<keyword id="KW-0132">Cell division</keyword>
<keyword id="KW-1003">Cell membrane</keyword>
<keyword id="KW-0133">Cell shape</keyword>
<keyword id="KW-0961">Cell wall biogenesis/degradation</keyword>
<keyword id="KW-0460">Magnesium</keyword>
<keyword id="KW-0472">Membrane</keyword>
<keyword id="KW-0479">Metal-binding</keyword>
<keyword id="KW-0573">Peptidoglycan synthesis</keyword>
<keyword id="KW-1185">Reference proteome</keyword>
<keyword id="KW-0808">Transferase</keyword>
<keyword id="KW-0812">Transmembrane</keyword>
<keyword id="KW-1133">Transmembrane helix</keyword>
<name>MRAY_LEUMM</name>
<evidence type="ECO:0000255" key="1">
    <source>
        <dbReference type="HAMAP-Rule" id="MF_00038"/>
    </source>
</evidence>
<proteinExistence type="inferred from homology"/>
<organism>
    <name type="scientific">Leuconostoc mesenteroides subsp. mesenteroides (strain ATCC 8293 / DSM 20343 / BCRC 11652 / CCM 1803 / JCM 6124 / NCDO 523 / NBRC 100496 / NCIMB 8023 / NCTC 12954 / NRRL B-1118 / 37Y)</name>
    <dbReference type="NCBI Taxonomy" id="203120"/>
    <lineage>
        <taxon>Bacteria</taxon>
        <taxon>Bacillati</taxon>
        <taxon>Bacillota</taxon>
        <taxon>Bacilli</taxon>
        <taxon>Lactobacillales</taxon>
        <taxon>Lactobacillaceae</taxon>
        <taxon>Leuconostoc</taxon>
    </lineage>
</organism>
<gene>
    <name evidence="1" type="primary">mraY</name>
    <name type="ordered locus">LEUM_1497</name>
</gene>